<gene>
    <name evidence="1" type="primary">trpR</name>
    <name type="ordered locus">UTI89_C5166</name>
</gene>
<organism>
    <name type="scientific">Escherichia coli (strain UTI89 / UPEC)</name>
    <dbReference type="NCBI Taxonomy" id="364106"/>
    <lineage>
        <taxon>Bacteria</taxon>
        <taxon>Pseudomonadati</taxon>
        <taxon>Pseudomonadota</taxon>
        <taxon>Gammaproteobacteria</taxon>
        <taxon>Enterobacterales</taxon>
        <taxon>Enterobacteriaceae</taxon>
        <taxon>Escherichia</taxon>
    </lineage>
</organism>
<sequence length="108" mass="12341">MAQQSPYSAAMAEQRHQEWLRFVDLLKNAYQNDLHLPLLNLMLTPDEREALGTRVRIVEELLRGEMSQRELKNELGAGIATITRGSNSLKAAPVELRQWLEDVLLKSD</sequence>
<name>TRPR_ECOUT</name>
<comment type="function">
    <text evidence="1">This protein is an aporepressor. When complexed with L-tryptophan it binds the operator region of the trp operon (5'-ACTAGT-'3') and prevents the initiation of transcription. The complex also regulates trp repressor biosynthesis by binding to its regulatory region.</text>
</comment>
<comment type="subunit">
    <text evidence="1">Homodimer.</text>
</comment>
<comment type="subcellular location">
    <subcellularLocation>
        <location evidence="1">Cytoplasm</location>
    </subcellularLocation>
</comment>
<comment type="similarity">
    <text evidence="1">Belongs to the TrpR family.</text>
</comment>
<dbReference type="EMBL" id="CP000243">
    <property type="protein sequence ID" value="ABE10566.1"/>
    <property type="molecule type" value="Genomic_DNA"/>
</dbReference>
<dbReference type="RefSeq" id="WP_000068677.1">
    <property type="nucleotide sequence ID" value="NZ_CP064825.1"/>
</dbReference>
<dbReference type="SMR" id="Q1R248"/>
<dbReference type="GeneID" id="89519371"/>
<dbReference type="KEGG" id="eci:UTI89_C5166"/>
<dbReference type="HOGENOM" id="CLU_147939_0_0_6"/>
<dbReference type="Proteomes" id="UP000001952">
    <property type="component" value="Chromosome"/>
</dbReference>
<dbReference type="GO" id="GO:0005737">
    <property type="term" value="C:cytoplasm"/>
    <property type="evidence" value="ECO:0007669"/>
    <property type="project" value="UniProtKB-SubCell"/>
</dbReference>
<dbReference type="GO" id="GO:0003700">
    <property type="term" value="F:DNA-binding transcription factor activity"/>
    <property type="evidence" value="ECO:0007669"/>
    <property type="project" value="InterPro"/>
</dbReference>
<dbReference type="GO" id="GO:0043565">
    <property type="term" value="F:sequence-specific DNA binding"/>
    <property type="evidence" value="ECO:0007669"/>
    <property type="project" value="InterPro"/>
</dbReference>
<dbReference type="GO" id="GO:0045892">
    <property type="term" value="P:negative regulation of DNA-templated transcription"/>
    <property type="evidence" value="ECO:0007669"/>
    <property type="project" value="UniProtKB-UniRule"/>
</dbReference>
<dbReference type="FunFam" id="1.10.1270.10:FF:000001">
    <property type="entry name" value="Trp operon repressor"/>
    <property type="match status" value="1"/>
</dbReference>
<dbReference type="Gene3D" id="1.10.1270.10">
    <property type="entry name" value="TrpR-like"/>
    <property type="match status" value="1"/>
</dbReference>
<dbReference type="HAMAP" id="MF_00475">
    <property type="entry name" value="Trp_repressor"/>
    <property type="match status" value="1"/>
</dbReference>
<dbReference type="InterPro" id="IPR000831">
    <property type="entry name" value="Trp_repress"/>
</dbReference>
<dbReference type="InterPro" id="IPR013335">
    <property type="entry name" value="Trp_repress_bac"/>
</dbReference>
<dbReference type="InterPro" id="IPR010921">
    <property type="entry name" value="Trp_repressor/repl_initiator"/>
</dbReference>
<dbReference type="InterPro" id="IPR038116">
    <property type="entry name" value="TrpR-like_sf"/>
</dbReference>
<dbReference type="NCBIfam" id="TIGR01321">
    <property type="entry name" value="TrpR"/>
    <property type="match status" value="1"/>
</dbReference>
<dbReference type="PANTHER" id="PTHR38025">
    <property type="entry name" value="TRP OPERON REPRESSOR"/>
    <property type="match status" value="1"/>
</dbReference>
<dbReference type="PANTHER" id="PTHR38025:SF1">
    <property type="entry name" value="TRP OPERON REPRESSOR"/>
    <property type="match status" value="1"/>
</dbReference>
<dbReference type="Pfam" id="PF01371">
    <property type="entry name" value="Trp_repressor"/>
    <property type="match status" value="1"/>
</dbReference>
<dbReference type="PIRSF" id="PIRSF003196">
    <property type="entry name" value="Trp_repressor"/>
    <property type="match status" value="1"/>
</dbReference>
<dbReference type="SUPFAM" id="SSF48295">
    <property type="entry name" value="TrpR-like"/>
    <property type="match status" value="1"/>
</dbReference>
<proteinExistence type="inferred from homology"/>
<feature type="chain" id="PRO_1000014040" description="Trp operon repressor">
    <location>
        <begin position="1"/>
        <end position="108"/>
    </location>
</feature>
<feature type="DNA-binding region" evidence="1">
    <location>
        <begin position="68"/>
        <end position="91"/>
    </location>
</feature>
<evidence type="ECO:0000255" key="1">
    <source>
        <dbReference type="HAMAP-Rule" id="MF_00475"/>
    </source>
</evidence>
<protein>
    <recommendedName>
        <fullName evidence="1">Trp operon repressor</fullName>
    </recommendedName>
</protein>
<accession>Q1R248</accession>
<reference key="1">
    <citation type="journal article" date="2006" name="Proc. Natl. Acad. Sci. U.S.A.">
        <title>Identification of genes subject to positive selection in uropathogenic strains of Escherichia coli: a comparative genomics approach.</title>
        <authorList>
            <person name="Chen S.L."/>
            <person name="Hung C.-S."/>
            <person name="Xu J."/>
            <person name="Reigstad C.S."/>
            <person name="Magrini V."/>
            <person name="Sabo A."/>
            <person name="Blasiar D."/>
            <person name="Bieri T."/>
            <person name="Meyer R.R."/>
            <person name="Ozersky P."/>
            <person name="Armstrong J.R."/>
            <person name="Fulton R.S."/>
            <person name="Latreille J.P."/>
            <person name="Spieth J."/>
            <person name="Hooton T.M."/>
            <person name="Mardis E.R."/>
            <person name="Hultgren S.J."/>
            <person name="Gordon J.I."/>
        </authorList>
    </citation>
    <scope>NUCLEOTIDE SEQUENCE [LARGE SCALE GENOMIC DNA]</scope>
    <source>
        <strain>UTI89 / UPEC</strain>
    </source>
</reference>
<keyword id="KW-0963">Cytoplasm</keyword>
<keyword id="KW-0238">DNA-binding</keyword>
<keyword id="KW-0678">Repressor</keyword>
<keyword id="KW-0804">Transcription</keyword>
<keyword id="KW-0805">Transcription regulation</keyword>